<feature type="chain" id="PRO_0000406066" description="DNA primase">
    <location>
        <begin position="1"/>
        <end position="884"/>
    </location>
</feature>
<feature type="zinc finger region" description="CHC2-type" evidence="1">
    <location>
        <begin position="825"/>
        <end position="864"/>
    </location>
</feature>
<feature type="site" description="Essential for primase activity" evidence="1">
    <location>
        <position position="529"/>
    </location>
</feature>
<feature type="site" description="Essential for primase activity" evidence="1">
    <location>
        <position position="531"/>
    </location>
</feature>
<name>PRIM_EHV2</name>
<proteinExistence type="inferred from homology"/>
<gene>
    <name type="primary">56</name>
</gene>
<organism>
    <name type="scientific">Equine herpesvirus 2 (strain 86/87)</name>
    <name type="common">EHV-2</name>
    <dbReference type="NCBI Taxonomy" id="82831"/>
    <lineage>
        <taxon>Viruses</taxon>
        <taxon>Duplodnaviria</taxon>
        <taxon>Heunggongvirae</taxon>
        <taxon>Peploviricota</taxon>
        <taxon>Herviviricetes</taxon>
        <taxon>Herpesvirales</taxon>
        <taxon>Orthoherpesviridae</taxon>
        <taxon>Gammaherpesvirinae</taxon>
        <taxon>Percavirus</taxon>
        <taxon>Percavirus equidgamma2</taxon>
        <taxon>Equid gammaherpesvirus 2</taxon>
    </lineage>
</organism>
<sequence>MATGRSTSTESSEKTCQQRDPLPEYRALCGTDGDAAEILTDVLTNTDSDGVVFCLAHNCYSYNIGGGEALLTLCLPAKRPWGAEKCLPVIQFRCDASRAQEFLFQGRPIPVRYIQTNLNHRAVKKFFKPILSVLTCSDKKGGGGEGAHADLKSTIFWFRAKFVAAVRKTFKITASPFWMISTFGCTEAQFVLVSSCYFFERHECTIDTLSHLSRLFDGSRGRQLTTVNTFSDLAGMFGTSAWLGRVPEFSAYVGKKLARDDLESAAVDEAVNAFRGQLMLSNADLIHYIYLSFFQCLNKEKFLEYSLRTNPHNIDGVPPEEPIITGFIDEGFKSKMATYYTKSSYLKNHVRVGSLYLDGVEGYSPEAIEAGPPAAAGGGGGADRYWAGQSRDVQGLLSDILADHPASRLSPDLHGLLDLAALGDSSGVAGGVKDSLFPEPLRCPVYRCQYLNKTFFAVVTRDNLARAWERAVQLPTQVTGWEGMEDARLTACVHYAELAFSLGHLREQLSVSRHEYFNPRLPVFNLVLDFDLPLKKPGLSLERVYSICRSVRSDVLSVLGVLGEVDEAAHPVYFFKSACPRPEWDEPYAGRPFCTCDAKLGLRIITPLPRGVAIVGGAPLVALAKILNRMIKMNREDLLEICPGLPDADGPLDTGIYHRGRCVRLPHTYKVNEACGLERLLRLFVCHPGSPDKAAYIRDAMTLRNLLHHSKSAYWEGNAREGVSEEAPQKTKVVYSVTDVSENFLVCQTQQQLPRSYERPDSRIETMTGRDLVTWVTEVAWPKVFHNIKAYIPDDKTTQFHFVKFIHTSHNIIQVKPQRGNNFVCISSNHRNKTQSVRIFIVLYTNKKDEVTITLMSQCFAHKCNSNKPRAHFSIPLQLRGRDF</sequence>
<evidence type="ECO:0000255" key="1">
    <source>
        <dbReference type="HAMAP-Rule" id="MF_04011"/>
    </source>
</evidence>
<comment type="function">
    <text evidence="1">Essential component of the helicase/primase complex. Unwinds the DNA at the replication forks and generates single-stranded DNA for both leading and lagging strand synthesis. The primase initiates primer synthesis and thereby produces large amount of short RNA primers on the lagging strand that the polymerase elongates using dNTPs.</text>
</comment>
<comment type="subunit">
    <text evidence="1">Associates with the helicase and the primase-associated factor to form the helicase-primase factor.</text>
</comment>
<comment type="subcellular location">
    <subcellularLocation>
        <location evidence="1">Host nucleus</location>
    </subcellularLocation>
    <text evidence="1">Requires the presence of the primase associated factor to properly localize in the host cell nucleus.</text>
</comment>
<comment type="similarity">
    <text evidence="1">Belongs to the herpesviridae DNA primase family.</text>
</comment>
<accession>Q66658</accession>
<organismHost>
    <name type="scientific">Equus caballus</name>
    <name type="common">Horse</name>
    <dbReference type="NCBI Taxonomy" id="9796"/>
</organismHost>
<reference key="1">
    <citation type="journal article" date="1995" name="J. Mol. Biol.">
        <title>The DNA sequence of equine herpesvirus 2.</title>
        <authorList>
            <person name="Telford E.A.R."/>
            <person name="Watson M.S."/>
            <person name="Aird H.C."/>
            <person name="Perry J."/>
            <person name="Davison A.J."/>
        </authorList>
    </citation>
    <scope>NUCLEOTIDE SEQUENCE [LARGE SCALE GENOMIC DNA]</scope>
</reference>
<keyword id="KW-0067">ATP-binding</keyword>
<keyword id="KW-0235">DNA replication</keyword>
<keyword id="KW-0347">Helicase</keyword>
<keyword id="KW-1048">Host nucleus</keyword>
<keyword id="KW-0378">Hydrolase</keyword>
<keyword id="KW-0479">Metal-binding</keyword>
<keyword id="KW-0547">Nucleotide-binding</keyword>
<keyword id="KW-1185">Reference proteome</keyword>
<keyword id="KW-0808">Transferase</keyword>
<keyword id="KW-0862">Zinc</keyword>
<keyword id="KW-0863">Zinc-finger</keyword>
<protein>
    <recommendedName>
        <fullName evidence="1">DNA primase</fullName>
        <ecNumber evidence="1">2.7.7.-</ecNumber>
    </recommendedName>
</protein>
<dbReference type="EC" id="2.7.7.-" evidence="1"/>
<dbReference type="EMBL" id="U20824">
    <property type="protein sequence ID" value="AAC13844.1"/>
    <property type="molecule type" value="Genomic_DNA"/>
</dbReference>
<dbReference type="PIR" id="S55651">
    <property type="entry name" value="S55651"/>
</dbReference>
<dbReference type="KEGG" id="vg:1461069"/>
<dbReference type="Proteomes" id="UP000007083">
    <property type="component" value="Segment"/>
</dbReference>
<dbReference type="GO" id="GO:0042025">
    <property type="term" value="C:host cell nucleus"/>
    <property type="evidence" value="ECO:0007669"/>
    <property type="project" value="UniProtKB-SubCell"/>
</dbReference>
<dbReference type="GO" id="GO:0005524">
    <property type="term" value="F:ATP binding"/>
    <property type="evidence" value="ECO:0007669"/>
    <property type="project" value="UniProtKB-KW"/>
</dbReference>
<dbReference type="GO" id="GO:0003899">
    <property type="term" value="F:DNA-directed RNA polymerase activity"/>
    <property type="evidence" value="ECO:0007669"/>
    <property type="project" value="InterPro"/>
</dbReference>
<dbReference type="GO" id="GO:0004386">
    <property type="term" value="F:helicase activity"/>
    <property type="evidence" value="ECO:0007669"/>
    <property type="project" value="UniProtKB-KW"/>
</dbReference>
<dbReference type="GO" id="GO:0016787">
    <property type="term" value="F:hydrolase activity"/>
    <property type="evidence" value="ECO:0007669"/>
    <property type="project" value="UniProtKB-KW"/>
</dbReference>
<dbReference type="GO" id="GO:0008270">
    <property type="term" value="F:zinc ion binding"/>
    <property type="evidence" value="ECO:0007669"/>
    <property type="project" value="UniProtKB-KW"/>
</dbReference>
<dbReference type="GO" id="GO:0039686">
    <property type="term" value="P:bidirectional double-stranded viral DNA replication"/>
    <property type="evidence" value="ECO:0007669"/>
    <property type="project" value="InterPro"/>
</dbReference>
<dbReference type="GO" id="GO:0006260">
    <property type="term" value="P:DNA replication"/>
    <property type="evidence" value="ECO:0007669"/>
    <property type="project" value="UniProtKB-KW"/>
</dbReference>
<dbReference type="HAMAP" id="MF_04011">
    <property type="entry name" value="HSV_PRIM"/>
    <property type="match status" value="1"/>
</dbReference>
<dbReference type="InterPro" id="IPR033685">
    <property type="entry name" value="HSV_PRIM"/>
</dbReference>
<dbReference type="Pfam" id="PF03121">
    <property type="entry name" value="Herpes_UL52"/>
    <property type="match status" value="1"/>
</dbReference>